<reference key="1">
    <citation type="journal article" date="2013" name="Proc. Natl. Acad. Sci. U.S.A.">
        <title>Polynucleobacter necessarius, a model for genome reduction in both free-living and symbiotic bacteria.</title>
        <authorList>
            <person name="Boscaro V."/>
            <person name="Felletti M."/>
            <person name="Vannini C."/>
            <person name="Ackerman M.S."/>
            <person name="Chain P.S."/>
            <person name="Malfatti S."/>
            <person name="Vergez L.M."/>
            <person name="Shin M."/>
            <person name="Doak T.G."/>
            <person name="Lynch M."/>
            <person name="Petroni G."/>
        </authorList>
    </citation>
    <scope>NUCLEOTIDE SEQUENCE [LARGE SCALE GENOMIC DNA]</scope>
    <source>
        <strain>STIR1</strain>
    </source>
</reference>
<feature type="chain" id="PRO_1000143284" description="Small ribosomal subunit protein uS17">
    <location>
        <begin position="1"/>
        <end position="89"/>
    </location>
</feature>
<name>RS17_POLNS</name>
<evidence type="ECO:0000255" key="1">
    <source>
        <dbReference type="HAMAP-Rule" id="MF_01345"/>
    </source>
</evidence>
<evidence type="ECO:0000305" key="2"/>
<comment type="function">
    <text evidence="1">One of the primary rRNA binding proteins, it binds specifically to the 5'-end of 16S ribosomal RNA.</text>
</comment>
<comment type="subunit">
    <text evidence="1">Part of the 30S ribosomal subunit.</text>
</comment>
<comment type="similarity">
    <text evidence="1">Belongs to the universal ribosomal protein uS17 family.</text>
</comment>
<dbReference type="EMBL" id="CP001010">
    <property type="protein sequence ID" value="ACB43387.1"/>
    <property type="molecule type" value="Genomic_DNA"/>
</dbReference>
<dbReference type="SMR" id="B1XSR0"/>
<dbReference type="STRING" id="452638.Pnec_0059"/>
<dbReference type="KEGG" id="pne:Pnec_0059"/>
<dbReference type="eggNOG" id="COG0186">
    <property type="taxonomic scope" value="Bacteria"/>
</dbReference>
<dbReference type="HOGENOM" id="CLU_073626_1_1_4"/>
<dbReference type="OrthoDB" id="9811714at2"/>
<dbReference type="GO" id="GO:0022627">
    <property type="term" value="C:cytosolic small ribosomal subunit"/>
    <property type="evidence" value="ECO:0007669"/>
    <property type="project" value="TreeGrafter"/>
</dbReference>
<dbReference type="GO" id="GO:0019843">
    <property type="term" value="F:rRNA binding"/>
    <property type="evidence" value="ECO:0007669"/>
    <property type="project" value="UniProtKB-UniRule"/>
</dbReference>
<dbReference type="GO" id="GO:0003735">
    <property type="term" value="F:structural constituent of ribosome"/>
    <property type="evidence" value="ECO:0007669"/>
    <property type="project" value="InterPro"/>
</dbReference>
<dbReference type="GO" id="GO:0006412">
    <property type="term" value="P:translation"/>
    <property type="evidence" value="ECO:0007669"/>
    <property type="project" value="UniProtKB-UniRule"/>
</dbReference>
<dbReference type="CDD" id="cd00364">
    <property type="entry name" value="Ribosomal_uS17"/>
    <property type="match status" value="1"/>
</dbReference>
<dbReference type="Gene3D" id="2.40.50.140">
    <property type="entry name" value="Nucleic acid-binding proteins"/>
    <property type="match status" value="1"/>
</dbReference>
<dbReference type="HAMAP" id="MF_01345_B">
    <property type="entry name" value="Ribosomal_uS17_B"/>
    <property type="match status" value="1"/>
</dbReference>
<dbReference type="InterPro" id="IPR012340">
    <property type="entry name" value="NA-bd_OB-fold"/>
</dbReference>
<dbReference type="InterPro" id="IPR000266">
    <property type="entry name" value="Ribosomal_uS17"/>
</dbReference>
<dbReference type="InterPro" id="IPR019984">
    <property type="entry name" value="Ribosomal_uS17_bact/chlr"/>
</dbReference>
<dbReference type="InterPro" id="IPR019979">
    <property type="entry name" value="Ribosomal_uS17_CS"/>
</dbReference>
<dbReference type="NCBIfam" id="NF004123">
    <property type="entry name" value="PRK05610.1"/>
    <property type="match status" value="1"/>
</dbReference>
<dbReference type="NCBIfam" id="TIGR03635">
    <property type="entry name" value="uS17_bact"/>
    <property type="match status" value="1"/>
</dbReference>
<dbReference type="PANTHER" id="PTHR10744">
    <property type="entry name" value="40S RIBOSOMAL PROTEIN S11 FAMILY MEMBER"/>
    <property type="match status" value="1"/>
</dbReference>
<dbReference type="PANTHER" id="PTHR10744:SF1">
    <property type="entry name" value="SMALL RIBOSOMAL SUBUNIT PROTEIN US17M"/>
    <property type="match status" value="1"/>
</dbReference>
<dbReference type="Pfam" id="PF00366">
    <property type="entry name" value="Ribosomal_S17"/>
    <property type="match status" value="1"/>
</dbReference>
<dbReference type="PRINTS" id="PR00973">
    <property type="entry name" value="RIBOSOMALS17"/>
</dbReference>
<dbReference type="SUPFAM" id="SSF50249">
    <property type="entry name" value="Nucleic acid-binding proteins"/>
    <property type="match status" value="1"/>
</dbReference>
<dbReference type="PROSITE" id="PS00056">
    <property type="entry name" value="RIBOSOMAL_S17"/>
    <property type="match status" value="1"/>
</dbReference>
<sequence length="89" mass="9994">MTELSKPLRRTLVGRVVSDKMQKTVTVLVERQVKHPVIGKYVGQSKKYHAHDEAGTYKMGDTVEIAESKPISRTKSWVVTRLVEASKGI</sequence>
<proteinExistence type="inferred from homology"/>
<accession>B1XSR0</accession>
<gene>
    <name evidence="1" type="primary">rpsQ</name>
    <name type="ordered locus">Pnec_0059</name>
</gene>
<organism>
    <name type="scientific">Polynucleobacter necessarius subsp. necessarius (strain STIR1)</name>
    <dbReference type="NCBI Taxonomy" id="452638"/>
    <lineage>
        <taxon>Bacteria</taxon>
        <taxon>Pseudomonadati</taxon>
        <taxon>Pseudomonadota</taxon>
        <taxon>Betaproteobacteria</taxon>
        <taxon>Burkholderiales</taxon>
        <taxon>Burkholderiaceae</taxon>
        <taxon>Polynucleobacter</taxon>
    </lineage>
</organism>
<protein>
    <recommendedName>
        <fullName evidence="1">Small ribosomal subunit protein uS17</fullName>
    </recommendedName>
    <alternativeName>
        <fullName evidence="2">30S ribosomal protein S17</fullName>
    </alternativeName>
</protein>
<keyword id="KW-0687">Ribonucleoprotein</keyword>
<keyword id="KW-0689">Ribosomal protein</keyword>
<keyword id="KW-0694">RNA-binding</keyword>
<keyword id="KW-0699">rRNA-binding</keyword>